<accession>Q61539</accession>
<accession>A2RTQ7</accession>
<accession>O09067</accession>
<accession>O09146</accession>
<accession>Q8C7A6</accession>
<dbReference type="EMBL" id="X89594">
    <property type="protein sequence ID" value="CAA61755.1"/>
    <property type="molecule type" value="mRNA"/>
</dbReference>
<dbReference type="EMBL" id="S82458">
    <property type="protein sequence ID" value="AAB37687.1"/>
    <property type="molecule type" value="mRNA"/>
</dbReference>
<dbReference type="EMBL" id="AK052256">
    <property type="protein sequence ID" value="BAC34898.1"/>
    <property type="molecule type" value="mRNA"/>
</dbReference>
<dbReference type="EMBL" id="AC126685">
    <property type="status" value="NOT_ANNOTATED_CDS"/>
    <property type="molecule type" value="Genomic_DNA"/>
</dbReference>
<dbReference type="EMBL" id="AC132189">
    <property type="status" value="NOT_ANNOTATED_CDS"/>
    <property type="molecule type" value="Genomic_DNA"/>
</dbReference>
<dbReference type="EMBL" id="BC132595">
    <property type="protein sequence ID" value="AAI32596.2"/>
    <property type="molecule type" value="mRNA"/>
</dbReference>
<dbReference type="EMBL" id="BC132597">
    <property type="protein sequence ID" value="AAI32598.2"/>
    <property type="molecule type" value="mRNA"/>
</dbReference>
<dbReference type="PIR" id="S58087">
    <property type="entry name" value="S58087"/>
</dbReference>
<dbReference type="RefSeq" id="NP_001152972.1">
    <property type="nucleotide sequence ID" value="NM_001159500.1"/>
</dbReference>
<dbReference type="RefSeq" id="NP_036064.3">
    <property type="nucleotide sequence ID" value="NM_011934.4"/>
</dbReference>
<dbReference type="BMRB" id="Q61539"/>
<dbReference type="SMR" id="Q61539"/>
<dbReference type="BioGRID" id="204938">
    <property type="interactions" value="181"/>
</dbReference>
<dbReference type="DIP" id="DIP-46110N"/>
<dbReference type="FunCoup" id="Q61539">
    <property type="interactions" value="983"/>
</dbReference>
<dbReference type="IntAct" id="Q61539">
    <property type="interactions" value="102"/>
</dbReference>
<dbReference type="STRING" id="10090.ENSMUSP00000105833"/>
<dbReference type="GlyGen" id="Q61539">
    <property type="glycosylation" value="1 site, 1 O-linked glycan (1 site)"/>
</dbReference>
<dbReference type="iPTMnet" id="Q61539"/>
<dbReference type="PhosphoSitePlus" id="Q61539"/>
<dbReference type="PaxDb" id="10090-ENSMUSP00000105833"/>
<dbReference type="ProteomicsDB" id="275944"/>
<dbReference type="Antibodypedia" id="13059">
    <property type="antibodies" value="309 antibodies from 36 providers"/>
</dbReference>
<dbReference type="DNASU" id="26380"/>
<dbReference type="Ensembl" id="ENSMUST00000021680.12">
    <property type="protein sequence ID" value="ENSMUSP00000021680.6"/>
    <property type="gene ID" value="ENSMUSG00000021255.18"/>
</dbReference>
<dbReference type="Ensembl" id="ENSMUST00000167891.2">
    <property type="protein sequence ID" value="ENSMUSP00000131335.2"/>
    <property type="gene ID" value="ENSMUSG00000021255.18"/>
</dbReference>
<dbReference type="GeneID" id="26380"/>
<dbReference type="KEGG" id="mmu:26380"/>
<dbReference type="UCSC" id="uc007ohw.2">
    <property type="organism name" value="mouse"/>
</dbReference>
<dbReference type="AGR" id="MGI:1346832"/>
<dbReference type="CTD" id="2103"/>
<dbReference type="MGI" id="MGI:1346832">
    <property type="gene designation" value="Esrrb"/>
</dbReference>
<dbReference type="VEuPathDB" id="HostDB:ENSMUSG00000021255"/>
<dbReference type="eggNOG" id="KOG3575">
    <property type="taxonomic scope" value="Eukaryota"/>
</dbReference>
<dbReference type="GeneTree" id="ENSGT00940000153433"/>
<dbReference type="HOGENOM" id="CLU_007368_11_0_1"/>
<dbReference type="InParanoid" id="Q61539"/>
<dbReference type="OrthoDB" id="5799427at2759"/>
<dbReference type="Reactome" id="R-MMU-383280">
    <property type="pathway name" value="Nuclear Receptor transcription pathway"/>
</dbReference>
<dbReference type="BioGRID-ORCS" id="26380">
    <property type="hits" value="4 hits in 65 CRISPR screens"/>
</dbReference>
<dbReference type="ChiTaRS" id="Esrrb">
    <property type="organism name" value="mouse"/>
</dbReference>
<dbReference type="PRO" id="PR:Q61539"/>
<dbReference type="Proteomes" id="UP000000589">
    <property type="component" value="Chromosome 12"/>
</dbReference>
<dbReference type="RNAct" id="Q61539">
    <property type="molecule type" value="protein"/>
</dbReference>
<dbReference type="Bgee" id="ENSMUSG00000021255">
    <property type="expression patterns" value="Expressed in retinal neural layer and 101 other cell types or tissues"/>
</dbReference>
<dbReference type="ExpressionAtlas" id="Q61539">
    <property type="expression patterns" value="baseline and differential"/>
</dbReference>
<dbReference type="GO" id="GO:0000793">
    <property type="term" value="C:condensed chromosome"/>
    <property type="evidence" value="ECO:0000315"/>
    <property type="project" value="UniProtKB"/>
</dbReference>
<dbReference type="GO" id="GO:0005737">
    <property type="term" value="C:cytoplasm"/>
    <property type="evidence" value="ECO:0000314"/>
    <property type="project" value="UniProtKB"/>
</dbReference>
<dbReference type="GO" id="GO:0005634">
    <property type="term" value="C:nucleus"/>
    <property type="evidence" value="ECO:0000314"/>
    <property type="project" value="UniProtKB"/>
</dbReference>
<dbReference type="GO" id="GO:0000987">
    <property type="term" value="F:cis-regulatory region sequence-specific DNA binding"/>
    <property type="evidence" value="ECO:0000314"/>
    <property type="project" value="UniProtKB"/>
</dbReference>
<dbReference type="GO" id="GO:0001228">
    <property type="term" value="F:DNA-binding transcription activator activity, RNA polymerase II-specific"/>
    <property type="evidence" value="ECO:0000314"/>
    <property type="project" value="UniProtKB"/>
</dbReference>
<dbReference type="GO" id="GO:0003700">
    <property type="term" value="F:DNA-binding transcription factor activity"/>
    <property type="evidence" value="ECO:0000314"/>
    <property type="project" value="UniProtKB"/>
</dbReference>
<dbReference type="GO" id="GO:0000981">
    <property type="term" value="F:DNA-binding transcription factor activity, RNA polymerase II-specific"/>
    <property type="evidence" value="ECO:0000315"/>
    <property type="project" value="UniProtKB"/>
</dbReference>
<dbReference type="GO" id="GO:0004879">
    <property type="term" value="F:nuclear receptor activity"/>
    <property type="evidence" value="ECO:0000315"/>
    <property type="project" value="UniProtKB"/>
</dbReference>
<dbReference type="GO" id="GO:0003707">
    <property type="term" value="F:nuclear steroid receptor activity"/>
    <property type="evidence" value="ECO:0007669"/>
    <property type="project" value="InterPro"/>
</dbReference>
<dbReference type="GO" id="GO:0000978">
    <property type="term" value="F:RNA polymerase II cis-regulatory region sequence-specific DNA binding"/>
    <property type="evidence" value="ECO:0000314"/>
    <property type="project" value="BHF-UCL"/>
</dbReference>
<dbReference type="GO" id="GO:0000993">
    <property type="term" value="F:RNA polymerase II complex binding"/>
    <property type="evidence" value="ECO:0000314"/>
    <property type="project" value="UniProtKB"/>
</dbReference>
<dbReference type="GO" id="GO:0061629">
    <property type="term" value="F:RNA polymerase II-specific DNA-binding transcription factor binding"/>
    <property type="evidence" value="ECO:0000353"/>
    <property type="project" value="BHF-UCL"/>
</dbReference>
<dbReference type="GO" id="GO:0043565">
    <property type="term" value="F:sequence-specific DNA binding"/>
    <property type="evidence" value="ECO:0000314"/>
    <property type="project" value="UniProtKB"/>
</dbReference>
<dbReference type="GO" id="GO:0005496">
    <property type="term" value="F:steroid binding"/>
    <property type="evidence" value="ECO:0007669"/>
    <property type="project" value="InterPro"/>
</dbReference>
<dbReference type="GO" id="GO:0008270">
    <property type="term" value="F:zinc ion binding"/>
    <property type="evidence" value="ECO:0007669"/>
    <property type="project" value="UniProtKB-KW"/>
</dbReference>
<dbReference type="GO" id="GO:0043697">
    <property type="term" value="P:cell dedifferentiation"/>
    <property type="evidence" value="ECO:0000314"/>
    <property type="project" value="UniProtKB"/>
</dbReference>
<dbReference type="GO" id="GO:0008283">
    <property type="term" value="P:cell population proliferation"/>
    <property type="evidence" value="ECO:0000250"/>
    <property type="project" value="UniProtKB"/>
</dbReference>
<dbReference type="GO" id="GO:0001892">
    <property type="term" value="P:embryonic placenta development"/>
    <property type="evidence" value="ECO:0000315"/>
    <property type="project" value="MGI"/>
</dbReference>
<dbReference type="GO" id="GO:0001701">
    <property type="term" value="P:in utero embryonic development"/>
    <property type="evidence" value="ECO:0000315"/>
    <property type="project" value="MGI"/>
</dbReference>
<dbReference type="GO" id="GO:0048839">
    <property type="term" value="P:inner ear development"/>
    <property type="evidence" value="ECO:0000315"/>
    <property type="project" value="UniProtKB"/>
</dbReference>
<dbReference type="GO" id="GO:0140001">
    <property type="term" value="P:morula formation"/>
    <property type="evidence" value="ECO:0000314"/>
    <property type="project" value="UniProtKB"/>
</dbReference>
<dbReference type="GO" id="GO:0045892">
    <property type="term" value="P:negative regulation of DNA-templated transcription"/>
    <property type="evidence" value="ECO:0000314"/>
    <property type="project" value="UniProtKB"/>
</dbReference>
<dbReference type="GO" id="GO:2000737">
    <property type="term" value="P:negative regulation of stem cell differentiation"/>
    <property type="evidence" value="ECO:0000315"/>
    <property type="project" value="UniProtKB"/>
</dbReference>
<dbReference type="GO" id="GO:0045494">
    <property type="term" value="P:photoreceptor cell maintenance"/>
    <property type="evidence" value="ECO:0000315"/>
    <property type="project" value="UniProtKB"/>
</dbReference>
<dbReference type="GO" id="GO:0045893">
    <property type="term" value="P:positive regulation of DNA-templated transcription"/>
    <property type="evidence" value="ECO:0000314"/>
    <property type="project" value="UniProtKB"/>
</dbReference>
<dbReference type="GO" id="GO:0045725">
    <property type="term" value="P:positive regulation of glycogen biosynthetic process"/>
    <property type="evidence" value="ECO:0000314"/>
    <property type="project" value="BHF-UCL"/>
</dbReference>
<dbReference type="GO" id="GO:1902459">
    <property type="term" value="P:positive regulation of stem cell population maintenance"/>
    <property type="evidence" value="ECO:0000314"/>
    <property type="project" value="UniProtKB"/>
</dbReference>
<dbReference type="GO" id="GO:0045944">
    <property type="term" value="P:positive regulation of transcription by RNA polymerase II"/>
    <property type="evidence" value="ECO:0000314"/>
    <property type="project" value="BHF-UCL"/>
</dbReference>
<dbReference type="GO" id="GO:0006355">
    <property type="term" value="P:regulation of DNA-templated transcription"/>
    <property type="evidence" value="ECO:0000250"/>
    <property type="project" value="UniProtKB"/>
</dbReference>
<dbReference type="GO" id="GO:2000035">
    <property type="term" value="P:regulation of stem cell division"/>
    <property type="evidence" value="ECO:0000314"/>
    <property type="project" value="UniProtKB"/>
</dbReference>
<dbReference type="GO" id="GO:0035019">
    <property type="term" value="P:somatic stem cell population maintenance"/>
    <property type="evidence" value="ECO:0000315"/>
    <property type="project" value="UniProtKB"/>
</dbReference>
<dbReference type="GO" id="GO:0017145">
    <property type="term" value="P:stem cell division"/>
    <property type="evidence" value="ECO:0000315"/>
    <property type="project" value="UniProtKB"/>
</dbReference>
<dbReference type="GO" id="GO:0019827">
    <property type="term" value="P:stem cell population maintenance"/>
    <property type="evidence" value="ECO:0000314"/>
    <property type="project" value="UniProtKB"/>
</dbReference>
<dbReference type="GO" id="GO:0001834">
    <property type="term" value="P:trophectodermal cell proliferation"/>
    <property type="evidence" value="ECO:0000315"/>
    <property type="project" value="MGI"/>
</dbReference>
<dbReference type="GO" id="GO:0001831">
    <property type="term" value="P:trophectodermal cellular morphogenesis"/>
    <property type="evidence" value="ECO:0000315"/>
    <property type="project" value="MGI"/>
</dbReference>
<dbReference type="CDD" id="cd07170">
    <property type="entry name" value="NR_DBD_ERR"/>
    <property type="match status" value="1"/>
</dbReference>
<dbReference type="CDD" id="cd06946">
    <property type="entry name" value="NR_LBD_ERR"/>
    <property type="match status" value="1"/>
</dbReference>
<dbReference type="FunFam" id="1.10.565.10:FF:000009">
    <property type="entry name" value="estrogen-related receptor gamma isoform X1"/>
    <property type="match status" value="1"/>
</dbReference>
<dbReference type="FunFam" id="3.30.50.10:FF:000008">
    <property type="entry name" value="estrogen-related receptor gamma isoform X1"/>
    <property type="match status" value="1"/>
</dbReference>
<dbReference type="Gene3D" id="3.30.50.10">
    <property type="entry name" value="Erythroid Transcription Factor GATA-1, subunit A"/>
    <property type="match status" value="1"/>
</dbReference>
<dbReference type="Gene3D" id="1.10.565.10">
    <property type="entry name" value="Retinoid X Receptor"/>
    <property type="match status" value="1"/>
</dbReference>
<dbReference type="InterPro" id="IPR024178">
    <property type="entry name" value="Est_rcpt/est-rel_rcp"/>
</dbReference>
<dbReference type="InterPro" id="IPR035500">
    <property type="entry name" value="NHR-like_dom_sf"/>
</dbReference>
<dbReference type="InterPro" id="IPR000536">
    <property type="entry name" value="Nucl_hrmn_rcpt_lig-bd"/>
</dbReference>
<dbReference type="InterPro" id="IPR050200">
    <property type="entry name" value="Nuclear_hormone_rcpt_NR3"/>
</dbReference>
<dbReference type="InterPro" id="IPR001723">
    <property type="entry name" value="Nuclear_hrmn_rcpt"/>
</dbReference>
<dbReference type="InterPro" id="IPR027289">
    <property type="entry name" value="Oest-rel_rcp"/>
</dbReference>
<dbReference type="InterPro" id="IPR001628">
    <property type="entry name" value="Znf_hrmn_rcpt"/>
</dbReference>
<dbReference type="InterPro" id="IPR013088">
    <property type="entry name" value="Znf_NHR/GATA"/>
</dbReference>
<dbReference type="PANTHER" id="PTHR48092">
    <property type="entry name" value="KNIRPS-RELATED PROTEIN-RELATED"/>
    <property type="match status" value="1"/>
</dbReference>
<dbReference type="Pfam" id="PF00104">
    <property type="entry name" value="Hormone_recep"/>
    <property type="match status" value="1"/>
</dbReference>
<dbReference type="Pfam" id="PF00105">
    <property type="entry name" value="zf-C4"/>
    <property type="match status" value="1"/>
</dbReference>
<dbReference type="PIRSF" id="PIRSF002527">
    <property type="entry name" value="ER-like_NR"/>
    <property type="match status" value="1"/>
</dbReference>
<dbReference type="PIRSF" id="PIRSF500939">
    <property type="entry name" value="ERR1-2-3"/>
    <property type="match status" value="1"/>
</dbReference>
<dbReference type="PRINTS" id="PR00398">
    <property type="entry name" value="STRDHORMONER"/>
</dbReference>
<dbReference type="PRINTS" id="PR00047">
    <property type="entry name" value="STROIDFINGER"/>
</dbReference>
<dbReference type="SMART" id="SM00430">
    <property type="entry name" value="HOLI"/>
    <property type="match status" value="1"/>
</dbReference>
<dbReference type="SMART" id="SM00399">
    <property type="entry name" value="ZnF_C4"/>
    <property type="match status" value="1"/>
</dbReference>
<dbReference type="SUPFAM" id="SSF57716">
    <property type="entry name" value="Glucocorticoid receptor-like (DNA-binding domain)"/>
    <property type="match status" value="1"/>
</dbReference>
<dbReference type="SUPFAM" id="SSF48508">
    <property type="entry name" value="Nuclear receptor ligand-binding domain"/>
    <property type="match status" value="1"/>
</dbReference>
<dbReference type="PROSITE" id="PS51843">
    <property type="entry name" value="NR_LBD"/>
    <property type="match status" value="1"/>
</dbReference>
<dbReference type="PROSITE" id="PS00031">
    <property type="entry name" value="NUCLEAR_REC_DBD_1"/>
    <property type="match status" value="1"/>
</dbReference>
<dbReference type="PROSITE" id="PS51030">
    <property type="entry name" value="NUCLEAR_REC_DBD_2"/>
    <property type="match status" value="1"/>
</dbReference>
<proteinExistence type="evidence at protein level"/>
<keyword id="KW-0007">Acetylation</keyword>
<keyword id="KW-0158">Chromosome</keyword>
<keyword id="KW-0963">Cytoplasm</keyword>
<keyword id="KW-0238">DNA-binding</keyword>
<keyword id="KW-0479">Metal-binding</keyword>
<keyword id="KW-0539">Nucleus</keyword>
<keyword id="KW-0675">Receptor</keyword>
<keyword id="KW-1185">Reference proteome</keyword>
<keyword id="KW-0804">Transcription</keyword>
<keyword id="KW-0805">Transcription regulation</keyword>
<keyword id="KW-0862">Zinc</keyword>
<keyword id="KW-0863">Zinc-finger</keyword>
<organism>
    <name type="scientific">Mus musculus</name>
    <name type="common">Mouse</name>
    <dbReference type="NCBI Taxonomy" id="10090"/>
    <lineage>
        <taxon>Eukaryota</taxon>
        <taxon>Metazoa</taxon>
        <taxon>Chordata</taxon>
        <taxon>Craniata</taxon>
        <taxon>Vertebrata</taxon>
        <taxon>Euteleostomi</taxon>
        <taxon>Mammalia</taxon>
        <taxon>Eutheria</taxon>
        <taxon>Euarchontoglires</taxon>
        <taxon>Glires</taxon>
        <taxon>Rodentia</taxon>
        <taxon>Myomorpha</taxon>
        <taxon>Muroidea</taxon>
        <taxon>Muridae</taxon>
        <taxon>Murinae</taxon>
        <taxon>Mus</taxon>
        <taxon>Mus</taxon>
    </lineage>
</organism>
<feature type="chain" id="PRO_0000053663" description="Steroid hormone receptor ERR2">
    <location>
        <begin position="1"/>
        <end position="433"/>
    </location>
</feature>
<feature type="domain" description="NR LBD" evidence="4">
    <location>
        <begin position="208"/>
        <end position="432"/>
    </location>
</feature>
<feature type="DNA-binding region" description="Nuclear receptor" evidence="3">
    <location>
        <begin position="100"/>
        <end position="186"/>
    </location>
</feature>
<feature type="zinc finger region" description="NR C4-type" evidence="3">
    <location>
        <begin position="103"/>
        <end position="123"/>
    </location>
</feature>
<feature type="zinc finger region" description="NR C4-type" evidence="3">
    <location>
        <begin position="139"/>
        <end position="163"/>
    </location>
</feature>
<feature type="region of interest" description="Disordered" evidence="5">
    <location>
        <begin position="1"/>
        <end position="38"/>
    </location>
</feature>
<feature type="region of interest" description="Interaction with NANOG" evidence="9">
    <location>
        <begin position="93"/>
        <end position="211"/>
    </location>
</feature>
<feature type="region of interest" description="Essential for ESRRB transcriptional activity and interaction with NCOA3" evidence="11">
    <location>
        <begin position="203"/>
        <end position="433"/>
    </location>
</feature>
<feature type="site" description="Important for stabilizing DNA-binding" evidence="1">
    <location>
        <position position="185"/>
    </location>
</feature>
<feature type="mutagenesis site" description="Loss of self-renewal in embryonic stem cells in absence of LIF. Does not interact with NCOA3." evidence="11">
    <original>K</original>
    <variation>A</variation>
    <location>
        <position position="259"/>
    </location>
</feature>
<feature type="mutagenesis site" description="Loss of self-renewal in embryonic stem cells in absence of LIF; when associated with A-425. Does not interact with NCOA3; when associated with A-425." evidence="11">
    <original>L</original>
    <variation>A</variation>
    <location>
        <position position="424"/>
    </location>
</feature>
<feature type="mutagenesis site" description="Loss of self-renewal in embryonic stem cells in absence of LIF; when associated with A-424. Does not interact with NCOA3; when associated with A-424." evidence="11">
    <original>F</original>
    <variation>A</variation>
    <location>
        <position position="425"/>
    </location>
</feature>
<feature type="sequence conflict" description="In Ref. 1; CAA61755." evidence="24" ref="1">
    <original>L</original>
    <variation>W</variation>
    <location>
        <position position="394"/>
    </location>
</feature>
<evidence type="ECO:0000250" key="1"/>
<evidence type="ECO:0000250" key="2">
    <source>
        <dbReference type="UniProtKB" id="O95718"/>
    </source>
</evidence>
<evidence type="ECO:0000255" key="3">
    <source>
        <dbReference type="PROSITE-ProRule" id="PRU00407"/>
    </source>
</evidence>
<evidence type="ECO:0000255" key="4">
    <source>
        <dbReference type="PROSITE-ProRule" id="PRU01189"/>
    </source>
</evidence>
<evidence type="ECO:0000256" key="5">
    <source>
        <dbReference type="SAM" id="MobiDB-lite"/>
    </source>
</evidence>
<evidence type="ECO:0000269" key="6">
    <source>
    </source>
</evidence>
<evidence type="ECO:0000269" key="7">
    <source>
    </source>
</evidence>
<evidence type="ECO:0000269" key="8">
    <source>
    </source>
</evidence>
<evidence type="ECO:0000269" key="9">
    <source>
    </source>
</evidence>
<evidence type="ECO:0000269" key="10">
    <source>
    </source>
</evidence>
<evidence type="ECO:0000269" key="11">
    <source>
    </source>
</evidence>
<evidence type="ECO:0000269" key="12">
    <source>
    </source>
</evidence>
<evidence type="ECO:0000269" key="13">
    <source>
    </source>
</evidence>
<evidence type="ECO:0000269" key="14">
    <source>
    </source>
</evidence>
<evidence type="ECO:0000269" key="15">
    <source>
    </source>
</evidence>
<evidence type="ECO:0000269" key="16">
    <source>
    </source>
</evidence>
<evidence type="ECO:0000269" key="17">
    <source>
    </source>
</evidence>
<evidence type="ECO:0000269" key="18">
    <source>
    </source>
</evidence>
<evidence type="ECO:0000269" key="19">
    <source>
    </source>
</evidence>
<evidence type="ECO:0000269" key="20">
    <source>
    </source>
</evidence>
<evidence type="ECO:0000269" key="21">
    <source>
    </source>
</evidence>
<evidence type="ECO:0000269" key="22">
    <source>
    </source>
</evidence>
<evidence type="ECO:0000303" key="23">
    <source>
    </source>
</evidence>
<evidence type="ECO:0000305" key="24"/>
<evidence type="ECO:0000312" key="25">
    <source>
        <dbReference type="MGI" id="MGI:1346832"/>
    </source>
</evidence>
<sequence length="433" mass="48328">MSSEDRHLGSSCGSFIKTEPSSPSSGIDALSHHSPSGSSDASGGFGIALSTHANGLDSPPMFAGAGLGGNPCRKSYEDCTSGIMEDSAIKCEYMLNAIPKRLCLVCGDIASGYHYGVASCEACKAFFKRTIQGNIEYNCPATNECEITKRRRKSCQACRFMKCLKVGMLKEGVRLDRVRGGRQKYKRRLDSENSPYLNLPISPPAKKPLTKIVSNLLGVEQDKLYAMPPNDIPEGDIKALTTLCELADRELVFLINWAKHIPGFPSLTLGDQMSLLQSAWMEILILGIVYRSLPYDDKLAYAEDYIMDEEHSRLVGLLDLYRAILQLVRRYKKLKVEKEEFMILKALALANSDSMYIENLEAVQKLQDLLHEALQDYELSQRHEEPRRAGKLLLTLPLLRQTAAKAVQHFYSVKLQGKVPMHKLFLEMLEAKV</sequence>
<gene>
    <name evidence="23 25" type="primary">Esrrb</name>
    <name type="synonym">Err-2</name>
    <name type="synonym">Err2</name>
    <name type="synonym">Nr3b2</name>
</gene>
<name>ERR2_MOUSE</name>
<reference key="1">
    <citation type="journal article" date="1996" name="Mech. Dev.">
        <title>Expression of a novel member of estrogen response element-binding nuclear receptors is restricted to the early stages of chorion formation during mouse embryogenesis.</title>
        <authorList>
            <person name="Pettersson K."/>
            <person name="Svensson K."/>
            <person name="Mattsson R."/>
            <person name="Carlsson B."/>
            <person name="Ohlsson R."/>
            <person name="Berkenstam A."/>
        </authorList>
    </citation>
    <scope>NUCLEOTIDE SEQUENCE [MRNA]</scope>
    <source>
        <strain>129</strain>
    </source>
</reference>
<reference key="2">
    <citation type="journal article" date="2005" name="Science">
        <title>The transcriptional landscape of the mammalian genome.</title>
        <authorList>
            <person name="Carninci P."/>
            <person name="Kasukawa T."/>
            <person name="Katayama S."/>
            <person name="Gough J."/>
            <person name="Frith M.C."/>
            <person name="Maeda N."/>
            <person name="Oyama R."/>
            <person name="Ravasi T."/>
            <person name="Lenhard B."/>
            <person name="Wells C."/>
            <person name="Kodzius R."/>
            <person name="Shimokawa K."/>
            <person name="Bajic V.B."/>
            <person name="Brenner S.E."/>
            <person name="Batalov S."/>
            <person name="Forrest A.R."/>
            <person name="Zavolan M."/>
            <person name="Davis M.J."/>
            <person name="Wilming L.G."/>
            <person name="Aidinis V."/>
            <person name="Allen J.E."/>
            <person name="Ambesi-Impiombato A."/>
            <person name="Apweiler R."/>
            <person name="Aturaliya R.N."/>
            <person name="Bailey T.L."/>
            <person name="Bansal M."/>
            <person name="Baxter L."/>
            <person name="Beisel K.W."/>
            <person name="Bersano T."/>
            <person name="Bono H."/>
            <person name="Chalk A.M."/>
            <person name="Chiu K.P."/>
            <person name="Choudhary V."/>
            <person name="Christoffels A."/>
            <person name="Clutterbuck D.R."/>
            <person name="Crowe M.L."/>
            <person name="Dalla E."/>
            <person name="Dalrymple B.P."/>
            <person name="de Bono B."/>
            <person name="Della Gatta G."/>
            <person name="di Bernardo D."/>
            <person name="Down T."/>
            <person name="Engstrom P."/>
            <person name="Fagiolini M."/>
            <person name="Faulkner G."/>
            <person name="Fletcher C.F."/>
            <person name="Fukushima T."/>
            <person name="Furuno M."/>
            <person name="Futaki S."/>
            <person name="Gariboldi M."/>
            <person name="Georgii-Hemming P."/>
            <person name="Gingeras T.R."/>
            <person name="Gojobori T."/>
            <person name="Green R.E."/>
            <person name="Gustincich S."/>
            <person name="Harbers M."/>
            <person name="Hayashi Y."/>
            <person name="Hensch T.K."/>
            <person name="Hirokawa N."/>
            <person name="Hill D."/>
            <person name="Huminiecki L."/>
            <person name="Iacono M."/>
            <person name="Ikeo K."/>
            <person name="Iwama A."/>
            <person name="Ishikawa T."/>
            <person name="Jakt M."/>
            <person name="Kanapin A."/>
            <person name="Katoh M."/>
            <person name="Kawasawa Y."/>
            <person name="Kelso J."/>
            <person name="Kitamura H."/>
            <person name="Kitano H."/>
            <person name="Kollias G."/>
            <person name="Krishnan S.P."/>
            <person name="Kruger A."/>
            <person name="Kummerfeld S.K."/>
            <person name="Kurochkin I.V."/>
            <person name="Lareau L.F."/>
            <person name="Lazarevic D."/>
            <person name="Lipovich L."/>
            <person name="Liu J."/>
            <person name="Liuni S."/>
            <person name="McWilliam S."/>
            <person name="Madan Babu M."/>
            <person name="Madera M."/>
            <person name="Marchionni L."/>
            <person name="Matsuda H."/>
            <person name="Matsuzawa S."/>
            <person name="Miki H."/>
            <person name="Mignone F."/>
            <person name="Miyake S."/>
            <person name="Morris K."/>
            <person name="Mottagui-Tabar S."/>
            <person name="Mulder N."/>
            <person name="Nakano N."/>
            <person name="Nakauchi H."/>
            <person name="Ng P."/>
            <person name="Nilsson R."/>
            <person name="Nishiguchi S."/>
            <person name="Nishikawa S."/>
            <person name="Nori F."/>
            <person name="Ohara O."/>
            <person name="Okazaki Y."/>
            <person name="Orlando V."/>
            <person name="Pang K.C."/>
            <person name="Pavan W.J."/>
            <person name="Pavesi G."/>
            <person name="Pesole G."/>
            <person name="Petrovsky N."/>
            <person name="Piazza S."/>
            <person name="Reed J."/>
            <person name="Reid J.F."/>
            <person name="Ring B.Z."/>
            <person name="Ringwald M."/>
            <person name="Rost B."/>
            <person name="Ruan Y."/>
            <person name="Salzberg S.L."/>
            <person name="Sandelin A."/>
            <person name="Schneider C."/>
            <person name="Schoenbach C."/>
            <person name="Sekiguchi K."/>
            <person name="Semple C.A."/>
            <person name="Seno S."/>
            <person name="Sessa L."/>
            <person name="Sheng Y."/>
            <person name="Shibata Y."/>
            <person name="Shimada H."/>
            <person name="Shimada K."/>
            <person name="Silva D."/>
            <person name="Sinclair B."/>
            <person name="Sperling S."/>
            <person name="Stupka E."/>
            <person name="Sugiura K."/>
            <person name="Sultana R."/>
            <person name="Takenaka Y."/>
            <person name="Taki K."/>
            <person name="Tammoja K."/>
            <person name="Tan S.L."/>
            <person name="Tang S."/>
            <person name="Taylor M.S."/>
            <person name="Tegner J."/>
            <person name="Teichmann S.A."/>
            <person name="Ueda H.R."/>
            <person name="van Nimwegen E."/>
            <person name="Verardo R."/>
            <person name="Wei C.L."/>
            <person name="Yagi K."/>
            <person name="Yamanishi H."/>
            <person name="Zabarovsky E."/>
            <person name="Zhu S."/>
            <person name="Zimmer A."/>
            <person name="Hide W."/>
            <person name="Bult C."/>
            <person name="Grimmond S.M."/>
            <person name="Teasdale R.D."/>
            <person name="Liu E.T."/>
            <person name="Brusic V."/>
            <person name="Quackenbush J."/>
            <person name="Wahlestedt C."/>
            <person name="Mattick J.S."/>
            <person name="Hume D.A."/>
            <person name="Kai C."/>
            <person name="Sasaki D."/>
            <person name="Tomaru Y."/>
            <person name="Fukuda S."/>
            <person name="Kanamori-Katayama M."/>
            <person name="Suzuki M."/>
            <person name="Aoki J."/>
            <person name="Arakawa T."/>
            <person name="Iida J."/>
            <person name="Imamura K."/>
            <person name="Itoh M."/>
            <person name="Kato T."/>
            <person name="Kawaji H."/>
            <person name="Kawagashira N."/>
            <person name="Kawashima T."/>
            <person name="Kojima M."/>
            <person name="Kondo S."/>
            <person name="Konno H."/>
            <person name="Nakano K."/>
            <person name="Ninomiya N."/>
            <person name="Nishio T."/>
            <person name="Okada M."/>
            <person name="Plessy C."/>
            <person name="Shibata K."/>
            <person name="Shiraki T."/>
            <person name="Suzuki S."/>
            <person name="Tagami M."/>
            <person name="Waki K."/>
            <person name="Watahiki A."/>
            <person name="Okamura-Oho Y."/>
            <person name="Suzuki H."/>
            <person name="Kawai J."/>
            <person name="Hayashizaki Y."/>
        </authorList>
    </citation>
    <scope>NUCLEOTIDE SEQUENCE [LARGE SCALE MRNA]</scope>
    <source>
        <strain>C57BL/6J</strain>
        <tissue>Heart</tissue>
    </source>
</reference>
<reference key="3">
    <citation type="journal article" date="2009" name="PLoS Biol.">
        <title>Lineage-specific biology revealed by a finished genome assembly of the mouse.</title>
        <authorList>
            <person name="Church D.M."/>
            <person name="Goodstadt L."/>
            <person name="Hillier L.W."/>
            <person name="Zody M.C."/>
            <person name="Goldstein S."/>
            <person name="She X."/>
            <person name="Bult C.J."/>
            <person name="Agarwala R."/>
            <person name="Cherry J.L."/>
            <person name="DiCuccio M."/>
            <person name="Hlavina W."/>
            <person name="Kapustin Y."/>
            <person name="Meric P."/>
            <person name="Maglott D."/>
            <person name="Birtle Z."/>
            <person name="Marques A.C."/>
            <person name="Graves T."/>
            <person name="Zhou S."/>
            <person name="Teague B."/>
            <person name="Potamousis K."/>
            <person name="Churas C."/>
            <person name="Place M."/>
            <person name="Herschleb J."/>
            <person name="Runnheim R."/>
            <person name="Forrest D."/>
            <person name="Amos-Landgraf J."/>
            <person name="Schwartz D.C."/>
            <person name="Cheng Z."/>
            <person name="Lindblad-Toh K."/>
            <person name="Eichler E.E."/>
            <person name="Ponting C.P."/>
        </authorList>
    </citation>
    <scope>NUCLEOTIDE SEQUENCE [LARGE SCALE GENOMIC DNA]</scope>
    <source>
        <strain>C57BL/6J</strain>
    </source>
</reference>
<reference key="4">
    <citation type="journal article" date="2004" name="Genome Res.">
        <title>The status, quality, and expansion of the NIH full-length cDNA project: the Mammalian Gene Collection (MGC).</title>
        <authorList>
            <consortium name="The MGC Project Team"/>
        </authorList>
    </citation>
    <scope>NUCLEOTIDE SEQUENCE [LARGE SCALE MRNA]</scope>
    <source>
        <tissue>Brain</tissue>
    </source>
</reference>
<reference key="5">
    <citation type="journal article" date="1997" name="Nature">
        <title>Placental abnormalities in mouse embryos lacking the orphan nuclear receptor ERR-beta.</title>
        <authorList>
            <person name="Luo J."/>
            <person name="Sladek R."/>
            <person name="Bader J.A."/>
            <person name="Matthyssen A."/>
            <person name="Rossant J."/>
            <person name="Giguere V."/>
        </authorList>
    </citation>
    <scope>DISRUPTION PHENOTYPE</scope>
    <scope>DEVELOPMENTAL STAGE</scope>
    <scope>FUNCTION</scope>
</reference>
<reference key="6">
    <citation type="journal article" date="2007" name="Dev. Cell">
        <title>Estrogen-related receptor beta/NR3B2 controls epithelial cell fate and endolymph production by the stria vascularis.</title>
        <authorList>
            <person name="Chen J."/>
            <person name="Nathans J."/>
        </authorList>
    </citation>
    <scope>DISRUPTION PHENOTYPE</scope>
    <scope>TISSUE SPECIFICITY</scope>
</reference>
<reference key="7">
    <citation type="journal article" date="2008" name="Mol. Cell. Biol.">
        <title>Estrogen-related receptor beta interacts with Oct4 to positively regulate Nanog gene expression.</title>
        <authorList>
            <person name="van den Berg D.L."/>
            <person name="Zhang W."/>
            <person name="Yates A."/>
            <person name="Engelen E."/>
            <person name="Takacs K."/>
            <person name="Bezstarosti K."/>
            <person name="Demmers J."/>
            <person name="Chambers I."/>
            <person name="Poot R.A."/>
        </authorList>
    </citation>
    <scope>INTERACTION WITH POU5F1</scope>
    <scope>FUNCTION</scope>
</reference>
<reference key="8">
    <citation type="journal article" date="2008" name="J. Biol. Chem.">
        <title>Esrrb activates Oct4 transcription and sustains self-renewal and pluripotency in embryonic stem cells.</title>
        <authorList>
            <person name="Zhang X."/>
            <person name="Zhang J."/>
            <person name="Wang T."/>
            <person name="Esteban M.A."/>
            <person name="Pei D."/>
        </authorList>
    </citation>
    <scope>INTERACTION WITH NANOG</scope>
    <scope>FUNCTION</scope>
    <scope>REGION</scope>
</reference>
<reference key="9">
    <citation type="journal article" date="2008" name="Neurosci. Lett.">
        <title>Efferent retinal projections visualized by immunohistochemical detection of the estrogen-related receptor beta in the postnatal and adult mouse brain.</title>
        <authorList>
            <person name="Real M.A."/>
            <person name="Heredia R."/>
            <person name="Davila J.C."/>
            <person name="Guirado S."/>
        </authorList>
    </citation>
    <scope>SUBCELLULAR LOCATION</scope>
</reference>
<reference key="10">
    <citation type="journal article" date="2010" name="Proc. Natl. Acad. Sci. U.S.A.">
        <title>The orphan nuclear hormone receptor ERRbeta controls rod photoreceptor survival.</title>
        <authorList>
            <person name="Onishi A."/>
            <person name="Peng G.H."/>
            <person name="Poth E.M."/>
            <person name="Lee D.A."/>
            <person name="Chen J."/>
            <person name="Alexis U."/>
            <person name="de Melo J."/>
            <person name="Chen S."/>
            <person name="Blackshaw S."/>
        </authorList>
    </citation>
    <scope>TISSUE SPECIFICITY</scope>
    <scope>FUNCTION</scope>
</reference>
<reference key="11">
    <citation type="journal article" date="2012" name="Cell Stem Cell">
        <title>Esrrb is a direct Nanog target gene that can substitute for Nanog function in pluripotent cells.</title>
        <authorList>
            <person name="Festuccia N."/>
            <person name="Osorno R."/>
            <person name="Halbritter F."/>
            <person name="Karwacki-Neisius V."/>
            <person name="Navarro P."/>
            <person name="Colby D."/>
            <person name="Wong F."/>
            <person name="Yates A."/>
            <person name="Tomlinson S.R."/>
            <person name="Chambers I."/>
        </authorList>
    </citation>
    <scope>INDUCTION</scope>
    <scope>FUNCTION</scope>
</reference>
<reference key="12">
    <citation type="journal article" date="2012" name="Cell Stem Cell">
        <title>Esrrb is a pivotal target of the Gsk3/Tcf3 axis regulating embryonic stem cell self-renewal.</title>
        <authorList>
            <person name="Martello G."/>
            <person name="Sugimoto T."/>
            <person name="Diamanti E."/>
            <person name="Joshi A."/>
            <person name="Hannah R."/>
            <person name="Ohtsuka S."/>
            <person name="Goettgens B."/>
            <person name="Niwa H."/>
            <person name="Smith A."/>
        </authorList>
    </citation>
    <scope>FUNCTION</scope>
    <scope>INDUCTION</scope>
</reference>
<reference key="13">
    <citation type="journal article" date="2012" name="Genes Dev.">
        <title>Ncoa3 functions as an essential Esrrb coactivator to sustain embryonic stem cell self-renewal and reprogramming.</title>
        <authorList>
            <person name="Percharde M."/>
            <person name="Lavial F."/>
            <person name="Ng J.H."/>
            <person name="Kumar V."/>
            <person name="Tomaz R.A."/>
            <person name="Martin N."/>
            <person name="Yeo J.C."/>
            <person name="Gil J."/>
            <person name="Prabhakar S."/>
            <person name="Ng H.H."/>
            <person name="Parker M.G."/>
            <person name="Azuara V."/>
        </authorList>
    </citation>
    <scope>REGION</scope>
    <scope>MUTAGENESIS OF LYS-259; LEU-424 AND PHE-425</scope>
    <scope>FUNCTION</scope>
    <scope>INTERACTION WITH NCOA3</scope>
</reference>
<reference key="14">
    <citation type="journal article" date="2013" name="Mol. Cell. Biol.">
        <title>Dax1 associates with Esrrb and regulates its function in embryonic stem cells.</title>
        <authorList>
            <person name="Uranishi K."/>
            <person name="Akagi T."/>
            <person name="Sun C."/>
            <person name="Koide H."/>
            <person name="Yokota T."/>
        </authorList>
    </citation>
    <scope>TISSUE SPECIFICITY</scope>
    <scope>INDUCTION</scope>
    <scope>INTERACTION WITH NR0B1</scope>
    <scope>FUNCTION</scope>
</reference>
<reference key="15">
    <citation type="journal article" date="2013" name="Stem Cells">
        <title>Co-motif discovery identifies an Esrrb-Sox2-DNA ternary complex as a mediator of transcriptional differences between mouse embryonic and epiblast stem cells.</title>
        <authorList>
            <person name="Hutchins A.P."/>
            <person name="Choo S.H."/>
            <person name="Mistri T.K."/>
            <person name="Rahmani M."/>
            <person name="Woon C.T."/>
            <person name="Ng C.K."/>
            <person name="Jauch R."/>
            <person name="Robson P."/>
        </authorList>
    </citation>
    <scope>FUNCTION</scope>
</reference>
<reference key="16">
    <citation type="journal article" date="2015" name="Nat. Commun.">
        <title>Fgf and Esrrb integrate epigenetic and transcriptional networks that regulate self-renewal of trophoblast stem cells.</title>
        <authorList>
            <person name="Latos P.A."/>
            <person name="Goncalves A."/>
            <person name="Oxley D."/>
            <person name="Mohammed H."/>
            <person name="Turro E."/>
            <person name="Hemberger M."/>
        </authorList>
    </citation>
    <scope>FUNCTION</scope>
    <scope>INTERACTION WITH KDM1A AND INTEGRATOR COMPLEX</scope>
</reference>
<reference key="17">
    <citation type="journal article" date="2016" name="Biochem. Biophys. Res. Commun.">
        <title>Esrrb directly binds to Gata6 promoter and regulates its expression with Dax1 and Ncoa3.</title>
        <authorList>
            <person name="Uranishi K."/>
            <person name="Akagi T."/>
            <person name="Koide H."/>
            <person name="Yokota T."/>
        </authorList>
    </citation>
    <scope>INTERACTION WITH NR0B1</scope>
    <scope>FUNCTION</scope>
</reference>
<reference key="18">
    <citation type="journal article" date="2016" name="Nat. Cell Biol.">
        <title>Mitotic binding of Esrrb marks key regulatory regions of the pluripotency network.</title>
        <authorList>
            <person name="Festuccia N."/>
            <person name="Dubois A."/>
            <person name="Vandormael-Pournin S."/>
            <person name="Gallego Tejeda E."/>
            <person name="Mouren A."/>
            <person name="Bessonnard S."/>
            <person name="Mueller F."/>
            <person name="Proux C."/>
            <person name="Cohen-Tannoudji M."/>
            <person name="Navarro P."/>
        </authorList>
    </citation>
    <scope>FUNCTION</scope>
    <scope>SUBCELLULAR LOCATION</scope>
</reference>
<reference key="19">
    <citation type="journal article" date="2016" name="Stem Cells">
        <title>Combined Overexpression of JARID2, PRDM14, ESRRB, and SALL4A Dramatically Improves Efficiency and Kinetics of Reprogramming to Induced Pluripotent Stem Cells.</title>
        <authorList>
            <person name="Iseki H."/>
            <person name="Nakachi Y."/>
            <person name="Hishida T."/>
            <person name="Yamashita-Sugahara Y."/>
            <person name="Hirasaki M."/>
            <person name="Ueda A."/>
            <person name="Tanimoto Y."/>
            <person name="Iijima S."/>
            <person name="Sugiyama F."/>
            <person name="Yagami K."/>
            <person name="Takahashi S."/>
            <person name="Okuda A."/>
            <person name="Okazaki Y."/>
        </authorList>
    </citation>
    <scope>INTERACTION WITH JARID2</scope>
</reference>
<reference key="20">
    <citation type="journal article" date="2021" name="Development">
        <title>The combined action of Esrrb and Nr5a2 is essential for murine naive pluripotency.</title>
        <authorList>
            <person name="Festuccia N."/>
            <person name="Owens N."/>
            <person name="Chervova A."/>
            <person name="Dubois A."/>
            <person name="Navarro P."/>
        </authorList>
    </citation>
    <scope>FUNCTION</scope>
</reference>
<reference key="21">
    <citation type="journal article" date="2024" name="Science">
        <title>Nr5a2 is dispensable for zygotic genome activation but essential for morula development.</title>
        <authorList>
            <person name="Festuccia N."/>
            <person name="Vandormael-Pournin S."/>
            <person name="Chervova A."/>
            <person name="Geiselmann A."/>
            <person name="Langa-Vives F."/>
            <person name="Coux R.X."/>
            <person name="Gonzalez I."/>
            <person name="Collet G.G."/>
            <person name="Cohen-Tannoudji M."/>
            <person name="Navarro P."/>
        </authorList>
    </citation>
    <scope>FUNCTION</scope>
</reference>
<protein>
    <recommendedName>
        <fullName evidence="24">Steroid hormone receptor ERR2</fullName>
    </recommendedName>
    <alternativeName>
        <fullName>Estrogen receptor-like 2</fullName>
    </alternativeName>
    <alternativeName>
        <fullName evidence="2">Estrogen-related receptor beta</fullName>
        <shortName>ERR-beta</shortName>
    </alternativeName>
    <alternativeName>
        <fullName>Nuclear receptor subfamily 3 group B member 2</fullName>
    </alternativeName>
</protein>
<comment type="function">
    <text evidence="2 6 8 9 10 11 12 13 14 15 16 18 19 20 21 22">Transcription factor that binds a canonical ESRRB recognition (ERRE) sequence 5'TCAAGGTCA-3' localized on promoter and enhancer of targets genes regulating their expression or their transcriptional activity (PubMed:18662995, PubMed:18957414, PubMed:20534447, PubMed:23019124, PubMed:23169531, PubMed:23508100, PubMed:26206133, PubMed:27601327, PubMed:27723719). Plays a role, in a LIF-independent manner, in maintainance of self-renewal and pluripotency of embryonic and trophoblast stem cells through different signaling pathways including FGF signaling pathway and Wnt signaling pathways (PubMed:18957414, PubMed:20534447, PubMed:23019124, PubMed:23040477, PubMed:23040478, PubMed:23169531, PubMed:26206133, PubMed:34397088). Involved in morula development (2-16 cells embryos) by acting as a regulator at the 8-cell stage (PubMed:39361745). Upon FGF signaling pathway activation, interacts with KDM1A by directly binding to enhancer site of ELF5 and EOMES and activating their transcription leading to self-renewal of trophoblast stem cells (PubMed:26206133). Also regulates expression of multiple rod-specific genes and is required for survival of this cell type (PubMed:20534447). Plays a role as transcription factor activator of GATA6, NR0B1, POU5F1 and PERM1 (PubMed:18662995, PubMed:18957414, PubMed:23508100). Plays a role as transcription factor repressor of NFE2L2 transcriptional activity and ESR1 transcriptional activity (By similarity). During mitosis remains bound to a subset of interphase target genes, including pluripotency regulators, through the canonical ESRRB recognition (ERRE) sequence, leading to their transcriptional activation in early G1 phase (PubMed:27723719). Can coassemble on structured DNA elements with other transcription factors like SOX2, POU5F1, KDM1A and NCOA3 to trigger ESRRB-dependent gene activation (PubMed:18662995, PubMed:23019124, PubMed:23169531, PubMed:26206133). This mechanism, in the case of SOX2 corecruitment prevents the embryonic stem cells (ESCs) to epiblast stem cells (EpiSC) transition through positive regulation of NR0B1 that inhibits the EpiSC transcriptional program (PubMed:23169531). Also plays a role inner ear development by controlling expression of ion channels and transporters and in early placentation (PubMed:17765677, PubMed:9285590).</text>
</comment>
<comment type="subunit">
    <text evidence="2 8 9 11 15 16 17 18">Binds DNA as a monomer (By similarity). Interacts with NR0B1; represses ESRRB activity at the GATA6 promoter (PubMed:23508100, PubMed:27601327). Interacts with NANOG; reciprocally modulates their transcriptional activities and activates POU5F1 expression (PubMed:18957414). Interacts with NCOA3; mediates the interaction between ESRRB and RNA polymerase II complexes and allows NCOA3 corecruitment to ESRRB, KLF4, NANOG, and SOX2 enhancer regions to trigger ESRRB-dependent gene activation involved in self-renewal and pluripotency (PubMed:23019124). Interacts with KDM1A; co-occupes the core set of ESRRB targets including ELF5 and EOMES (PubMed:26206133). Interacts with the multiprotein complex Integrator, at least composed of INTS1, INTS2, INTS3, INTS4, INTS5, INTS6, INTS7, INTS8, INTS9/RC74, INTS10, INTS11/CPSF3L and INTS12; ESRRB is probably not a core component of the integrator complex and associates to integrator via its interaction with INTS1 and INTS9; attracts the transcriptional machinery (PubMed:26206133). Interacts with JARID2 (PubMed:26523946). Interacts with POU5F1; recruits ESRRB near the POU5F1-SOX2 element in the NANOG proximal promoter leading to activation of NANOG expression; the interaction is DNA independent (PubMed:18662995).</text>
</comment>
<comment type="interaction">
    <interactant intactId="EBI-2312731">
        <id>Q61539</id>
    </interactant>
    <interactant intactId="EBI-904134">
        <id>Q9R190</id>
        <label>Mta2</label>
    </interactant>
    <organismsDiffer>false</organismsDiffer>
    <experiments>3</experiments>
</comment>
<comment type="interaction">
    <interactant intactId="EBI-2312731">
        <id>Q61539</id>
    </interactant>
    <interactant intactId="EBI-2312665">
        <id>Q61066</id>
        <label>Nr0b1</label>
    </interactant>
    <organismsDiffer>false</organismsDiffer>
    <experiments>3</experiments>
</comment>
<comment type="interaction">
    <interactant intactId="EBI-2312731">
        <id>Q61539</id>
    </interactant>
    <interactant intactId="EBI-5691372">
        <id>Q3UNW5</id>
        <label>Tfcp2l1</label>
    </interactant>
    <organismsDiffer>false</organismsDiffer>
    <experiments>4</experiments>
</comment>
<comment type="interaction">
    <interactant intactId="EBI-2312731">
        <id>Q61539</id>
    </interactant>
    <interactant intactId="EBI-447269">
        <id>Q16665</id>
        <label>HIF1A</label>
    </interactant>
    <organismsDiffer>true</organismsDiffer>
    <experiments>2</experiments>
</comment>
<comment type="subcellular location">
    <subcellularLocation>
        <location evidence="7">Nucleus</location>
    </subcellularLocation>
    <subcellularLocation>
        <location evidence="7">Cytoplasm</location>
    </subcellularLocation>
    <subcellularLocation>
        <location evidence="19">Chromosome</location>
    </subcellularLocation>
</comment>
<comment type="tissue specificity">
    <text evidence="6 10 15">Highly expressed in undifferentiated ESCs (PubMed:23508100). Expressed in immature horizontal cells and in rod photoreceptors at intermediate and late stages of differentiation (PubMed:20534447). Expressed in endolymph-producing epithelial cells (PubMed:17765677).</text>
</comment>
<comment type="developmental stage">
    <text evidence="22">Found in the extra-embryonic ectoderm at 5.5 dpc, 6 dpc and 6.5 dpc. At 7.5 dpc, is exclusively detected in chorion, and at 8.5 dpc is present only at its free margin. Expression is not detected in the ectoplacental cone at any stage of development, nor is placental expression detected after 8.5 dpc.</text>
</comment>
<comment type="induction">
    <text evidence="12 13 15">Induced by NANOG (PubMed:23040477). Induced by GSK3 inhibition through inhibition of TCF3 repression. Repressed by TCF3 (PubMed:23040478). Reduced upon differentiation induced by LIF depletion (PubMed:23508100).</text>
</comment>
<comment type="PTM">
    <text evidence="2">Acetylated by PCAF/KAT2 (in vitro).</text>
</comment>
<comment type="disruption phenotype">
    <text evidence="6 22">Homozygote Esrrb mutant embryos die at 10.5 dpc. They have severely impaired placental formation. The mutants display abnormal chorion development associated with an overabundance of trophoblast giant cells and a severe deficiency of diploid trophoblast (PubMed:9285590). Conditional knockdown mice exhibit head bobbing and spinning and running in circles and have hearing impairment (PubMed:17765677).</text>
</comment>
<comment type="similarity">
    <text evidence="24">Belongs to the nuclear hormone receptor family. NR3 subfamily.</text>
</comment>